<dbReference type="EMBL" id="CP000416">
    <property type="protein sequence ID" value="ABJ64741.1"/>
    <property type="molecule type" value="Genomic_DNA"/>
</dbReference>
<dbReference type="RefSeq" id="WP_011668475.1">
    <property type="nucleotide sequence ID" value="NC_008497.1"/>
</dbReference>
<dbReference type="SMR" id="Q03PY1"/>
<dbReference type="STRING" id="387344.LVIS_1666"/>
<dbReference type="GeneID" id="56993527"/>
<dbReference type="KEGG" id="lbr:LVIS_1666"/>
<dbReference type="eggNOG" id="COG0099">
    <property type="taxonomic scope" value="Bacteria"/>
</dbReference>
<dbReference type="HOGENOM" id="CLU_103849_1_1_9"/>
<dbReference type="Proteomes" id="UP000001652">
    <property type="component" value="Chromosome"/>
</dbReference>
<dbReference type="GO" id="GO:0005829">
    <property type="term" value="C:cytosol"/>
    <property type="evidence" value="ECO:0007669"/>
    <property type="project" value="TreeGrafter"/>
</dbReference>
<dbReference type="GO" id="GO:0015935">
    <property type="term" value="C:small ribosomal subunit"/>
    <property type="evidence" value="ECO:0007669"/>
    <property type="project" value="TreeGrafter"/>
</dbReference>
<dbReference type="GO" id="GO:0019843">
    <property type="term" value="F:rRNA binding"/>
    <property type="evidence" value="ECO:0007669"/>
    <property type="project" value="UniProtKB-UniRule"/>
</dbReference>
<dbReference type="GO" id="GO:0003735">
    <property type="term" value="F:structural constituent of ribosome"/>
    <property type="evidence" value="ECO:0007669"/>
    <property type="project" value="InterPro"/>
</dbReference>
<dbReference type="GO" id="GO:0000049">
    <property type="term" value="F:tRNA binding"/>
    <property type="evidence" value="ECO:0007669"/>
    <property type="project" value="UniProtKB-UniRule"/>
</dbReference>
<dbReference type="GO" id="GO:0006412">
    <property type="term" value="P:translation"/>
    <property type="evidence" value="ECO:0007669"/>
    <property type="project" value="UniProtKB-UniRule"/>
</dbReference>
<dbReference type="FunFam" id="1.10.8.50:FF:000001">
    <property type="entry name" value="30S ribosomal protein S13"/>
    <property type="match status" value="1"/>
</dbReference>
<dbReference type="FunFam" id="4.10.910.10:FF:000001">
    <property type="entry name" value="30S ribosomal protein S13"/>
    <property type="match status" value="1"/>
</dbReference>
<dbReference type="Gene3D" id="1.10.8.50">
    <property type="match status" value="1"/>
</dbReference>
<dbReference type="Gene3D" id="4.10.910.10">
    <property type="entry name" value="30s ribosomal protein s13, domain 2"/>
    <property type="match status" value="1"/>
</dbReference>
<dbReference type="HAMAP" id="MF_01315">
    <property type="entry name" value="Ribosomal_uS13"/>
    <property type="match status" value="1"/>
</dbReference>
<dbReference type="InterPro" id="IPR027437">
    <property type="entry name" value="Rbsml_uS13_C"/>
</dbReference>
<dbReference type="InterPro" id="IPR001892">
    <property type="entry name" value="Ribosomal_uS13"/>
</dbReference>
<dbReference type="InterPro" id="IPR010979">
    <property type="entry name" value="Ribosomal_uS13-like_H2TH"/>
</dbReference>
<dbReference type="InterPro" id="IPR019980">
    <property type="entry name" value="Ribosomal_uS13_bac-type"/>
</dbReference>
<dbReference type="InterPro" id="IPR018269">
    <property type="entry name" value="Ribosomal_uS13_CS"/>
</dbReference>
<dbReference type="NCBIfam" id="TIGR03631">
    <property type="entry name" value="uS13_bact"/>
    <property type="match status" value="1"/>
</dbReference>
<dbReference type="PANTHER" id="PTHR10871">
    <property type="entry name" value="30S RIBOSOMAL PROTEIN S13/40S RIBOSOMAL PROTEIN S18"/>
    <property type="match status" value="1"/>
</dbReference>
<dbReference type="PANTHER" id="PTHR10871:SF1">
    <property type="entry name" value="SMALL RIBOSOMAL SUBUNIT PROTEIN US13M"/>
    <property type="match status" value="1"/>
</dbReference>
<dbReference type="Pfam" id="PF00416">
    <property type="entry name" value="Ribosomal_S13"/>
    <property type="match status" value="1"/>
</dbReference>
<dbReference type="PIRSF" id="PIRSF002134">
    <property type="entry name" value="Ribosomal_S13"/>
    <property type="match status" value="1"/>
</dbReference>
<dbReference type="SUPFAM" id="SSF46946">
    <property type="entry name" value="S13-like H2TH domain"/>
    <property type="match status" value="1"/>
</dbReference>
<dbReference type="PROSITE" id="PS00646">
    <property type="entry name" value="RIBOSOMAL_S13_1"/>
    <property type="match status" value="1"/>
</dbReference>
<dbReference type="PROSITE" id="PS50159">
    <property type="entry name" value="RIBOSOMAL_S13_2"/>
    <property type="match status" value="1"/>
</dbReference>
<comment type="function">
    <text evidence="1">Located at the top of the head of the 30S subunit, it contacts several helices of the 16S rRNA. In the 70S ribosome it contacts the 23S rRNA (bridge B1a) and protein L5 of the 50S subunit (bridge B1b), connecting the 2 subunits; these bridges are implicated in subunit movement. Contacts the tRNAs in the A and P-sites.</text>
</comment>
<comment type="subunit">
    <text evidence="1">Part of the 30S ribosomal subunit. Forms a loose heterodimer with protein S19. Forms two bridges to the 50S subunit in the 70S ribosome.</text>
</comment>
<comment type="similarity">
    <text evidence="1">Belongs to the universal ribosomal protein uS13 family.</text>
</comment>
<gene>
    <name evidence="1" type="primary">rpsM</name>
    <name type="ordered locus">LVIS_1666</name>
</gene>
<feature type="chain" id="PRO_0000306625" description="Small ribosomal subunit protein uS13">
    <location>
        <begin position="1"/>
        <end position="121"/>
    </location>
</feature>
<feature type="region of interest" description="Disordered" evidence="2">
    <location>
        <begin position="89"/>
        <end position="121"/>
    </location>
</feature>
<evidence type="ECO:0000255" key="1">
    <source>
        <dbReference type="HAMAP-Rule" id="MF_01315"/>
    </source>
</evidence>
<evidence type="ECO:0000256" key="2">
    <source>
        <dbReference type="SAM" id="MobiDB-lite"/>
    </source>
</evidence>
<evidence type="ECO:0000305" key="3"/>
<organism>
    <name type="scientific">Levilactobacillus brevis (strain ATCC 367 / BCRC 12310 / CIP 105137 / JCM 1170 / LMG 11437 / NCIMB 947 / NCTC 947)</name>
    <name type="common">Lactobacillus brevis</name>
    <dbReference type="NCBI Taxonomy" id="387344"/>
    <lineage>
        <taxon>Bacteria</taxon>
        <taxon>Bacillati</taxon>
        <taxon>Bacillota</taxon>
        <taxon>Bacilli</taxon>
        <taxon>Lactobacillales</taxon>
        <taxon>Lactobacillaceae</taxon>
        <taxon>Levilactobacillus</taxon>
    </lineage>
</organism>
<proteinExistence type="inferred from homology"/>
<accession>Q03PY1</accession>
<protein>
    <recommendedName>
        <fullName evidence="1">Small ribosomal subunit protein uS13</fullName>
    </recommendedName>
    <alternativeName>
        <fullName evidence="3">30S ribosomal protein S13</fullName>
    </alternativeName>
</protein>
<reference key="1">
    <citation type="journal article" date="2006" name="Proc. Natl. Acad. Sci. U.S.A.">
        <title>Comparative genomics of the lactic acid bacteria.</title>
        <authorList>
            <person name="Makarova K.S."/>
            <person name="Slesarev A."/>
            <person name="Wolf Y.I."/>
            <person name="Sorokin A."/>
            <person name="Mirkin B."/>
            <person name="Koonin E.V."/>
            <person name="Pavlov A."/>
            <person name="Pavlova N."/>
            <person name="Karamychev V."/>
            <person name="Polouchine N."/>
            <person name="Shakhova V."/>
            <person name="Grigoriev I."/>
            <person name="Lou Y."/>
            <person name="Rohksar D."/>
            <person name="Lucas S."/>
            <person name="Huang K."/>
            <person name="Goodstein D.M."/>
            <person name="Hawkins T."/>
            <person name="Plengvidhya V."/>
            <person name="Welker D."/>
            <person name="Hughes J."/>
            <person name="Goh Y."/>
            <person name="Benson A."/>
            <person name="Baldwin K."/>
            <person name="Lee J.-H."/>
            <person name="Diaz-Muniz I."/>
            <person name="Dosti B."/>
            <person name="Smeianov V."/>
            <person name="Wechter W."/>
            <person name="Barabote R."/>
            <person name="Lorca G."/>
            <person name="Altermann E."/>
            <person name="Barrangou R."/>
            <person name="Ganesan B."/>
            <person name="Xie Y."/>
            <person name="Rawsthorne H."/>
            <person name="Tamir D."/>
            <person name="Parker C."/>
            <person name="Breidt F."/>
            <person name="Broadbent J.R."/>
            <person name="Hutkins R."/>
            <person name="O'Sullivan D."/>
            <person name="Steele J."/>
            <person name="Unlu G."/>
            <person name="Saier M.H. Jr."/>
            <person name="Klaenhammer T."/>
            <person name="Richardson P."/>
            <person name="Kozyavkin S."/>
            <person name="Weimer B.C."/>
            <person name="Mills D.A."/>
        </authorList>
    </citation>
    <scope>NUCLEOTIDE SEQUENCE [LARGE SCALE GENOMIC DNA]</scope>
    <source>
        <strain>ATCC 367 / BCRC 12310 / CIP 105137 / JCM 1170 / LMG 11437 / NCIMB 947 / NCTC 947</strain>
    </source>
</reference>
<sequence length="121" mass="13616">MPRIAGVDLPRDKRIAYGLTYIFGIGINTAHKIVADAGVPEDVRVRDLTPDQEDKVRAEVDKYKVEGDLRREVSLNIKNLQEIGSYRGMRHRRGLPVRGQHTKNNARTRKGKAVSIAGKKK</sequence>
<keyword id="KW-1185">Reference proteome</keyword>
<keyword id="KW-0687">Ribonucleoprotein</keyword>
<keyword id="KW-0689">Ribosomal protein</keyword>
<keyword id="KW-0694">RNA-binding</keyword>
<keyword id="KW-0699">rRNA-binding</keyword>
<keyword id="KW-0820">tRNA-binding</keyword>
<name>RS13_LEVBA</name>